<reference key="1">
    <citation type="journal article" date="2007" name="Genome Res.">
        <title>Genome characteristics of facultatively symbiotic Frankia sp. strains reflect host range and host plant biogeography.</title>
        <authorList>
            <person name="Normand P."/>
            <person name="Lapierre P."/>
            <person name="Tisa L.S."/>
            <person name="Gogarten J.P."/>
            <person name="Alloisio N."/>
            <person name="Bagnarol E."/>
            <person name="Bassi C.A."/>
            <person name="Berry A.M."/>
            <person name="Bickhart D.M."/>
            <person name="Choisne N."/>
            <person name="Couloux A."/>
            <person name="Cournoyer B."/>
            <person name="Cruveiller S."/>
            <person name="Daubin V."/>
            <person name="Demange N."/>
            <person name="Francino M.P."/>
            <person name="Goltsman E."/>
            <person name="Huang Y."/>
            <person name="Kopp O.R."/>
            <person name="Labarre L."/>
            <person name="Lapidus A."/>
            <person name="Lavire C."/>
            <person name="Marechal J."/>
            <person name="Martinez M."/>
            <person name="Mastronunzio J.E."/>
            <person name="Mullin B.C."/>
            <person name="Niemann J."/>
            <person name="Pujic P."/>
            <person name="Rawnsley T."/>
            <person name="Rouy Z."/>
            <person name="Schenowitz C."/>
            <person name="Sellstedt A."/>
            <person name="Tavares F."/>
            <person name="Tomkins J.P."/>
            <person name="Vallenet D."/>
            <person name="Valverde C."/>
            <person name="Wall L.G."/>
            <person name="Wang Y."/>
            <person name="Medigue C."/>
            <person name="Benson D.R."/>
        </authorList>
    </citation>
    <scope>NUCLEOTIDE SEQUENCE [LARGE SCALE GENOMIC DNA]</scope>
    <source>
        <strain>DSM 45818 / CECT 9043 / HFP020203 / CcI3</strain>
    </source>
</reference>
<evidence type="ECO:0000255" key="1">
    <source>
        <dbReference type="HAMAP-Rule" id="MF_01307"/>
    </source>
</evidence>
<evidence type="ECO:0000256" key="2">
    <source>
        <dbReference type="SAM" id="MobiDB-lite"/>
    </source>
</evidence>
<evidence type="ECO:0000305" key="3"/>
<keyword id="KW-1185">Reference proteome</keyword>
<keyword id="KW-0687">Ribonucleoprotein</keyword>
<keyword id="KW-0689">Ribosomal protein</keyword>
<keyword id="KW-0694">RNA-binding</keyword>
<keyword id="KW-0699">rRNA-binding</keyword>
<proteinExistence type="inferred from homology"/>
<sequence>MPGQQRRGGGSGGSDRRERRDRSGSGPAQEKNAYVERVVAINRVAKVVKGGRRFSFTALVVVGDADGTVGVGYGKAKEVPAAIAKGVEEAKKHFFKVPRIGSTIPHPVQGEEAAGVVLLKPASPGTGVIAGGPVRAVLECAGVHDVLSKSLGSSNPINIVHATVAALRGLMRPEEIAARRGLPLEDVAPPAMLRARAAGASV</sequence>
<organism>
    <name type="scientific">Frankia casuarinae (strain DSM 45818 / CECT 9043 / HFP020203 / CcI3)</name>
    <dbReference type="NCBI Taxonomy" id="106370"/>
    <lineage>
        <taxon>Bacteria</taxon>
        <taxon>Bacillati</taxon>
        <taxon>Actinomycetota</taxon>
        <taxon>Actinomycetes</taxon>
        <taxon>Frankiales</taxon>
        <taxon>Frankiaceae</taxon>
        <taxon>Frankia</taxon>
    </lineage>
</organism>
<protein>
    <recommendedName>
        <fullName evidence="1">Small ribosomal subunit protein uS5</fullName>
    </recommendedName>
    <alternativeName>
        <fullName evidence="3">30S ribosomal protein S5</fullName>
    </alternativeName>
</protein>
<dbReference type="EMBL" id="CP000249">
    <property type="protein sequence ID" value="ABD09983.1"/>
    <property type="molecule type" value="Genomic_DNA"/>
</dbReference>
<dbReference type="RefSeq" id="WP_011435054.1">
    <property type="nucleotide sequence ID" value="NZ_JENI01000019.1"/>
</dbReference>
<dbReference type="SMR" id="Q2JFF9"/>
<dbReference type="STRING" id="106370.Francci3_0599"/>
<dbReference type="KEGG" id="fra:Francci3_0599"/>
<dbReference type="eggNOG" id="COG0098">
    <property type="taxonomic scope" value="Bacteria"/>
</dbReference>
<dbReference type="HOGENOM" id="CLU_065898_2_2_11"/>
<dbReference type="OrthoDB" id="9809045at2"/>
<dbReference type="PhylomeDB" id="Q2JFF9"/>
<dbReference type="Proteomes" id="UP000001937">
    <property type="component" value="Chromosome"/>
</dbReference>
<dbReference type="GO" id="GO:0015935">
    <property type="term" value="C:small ribosomal subunit"/>
    <property type="evidence" value="ECO:0007669"/>
    <property type="project" value="InterPro"/>
</dbReference>
<dbReference type="GO" id="GO:0019843">
    <property type="term" value="F:rRNA binding"/>
    <property type="evidence" value="ECO:0007669"/>
    <property type="project" value="UniProtKB-UniRule"/>
</dbReference>
<dbReference type="GO" id="GO:0003735">
    <property type="term" value="F:structural constituent of ribosome"/>
    <property type="evidence" value="ECO:0007669"/>
    <property type="project" value="InterPro"/>
</dbReference>
<dbReference type="GO" id="GO:0006412">
    <property type="term" value="P:translation"/>
    <property type="evidence" value="ECO:0007669"/>
    <property type="project" value="UniProtKB-UniRule"/>
</dbReference>
<dbReference type="FunFam" id="3.30.160.20:FF:000001">
    <property type="entry name" value="30S ribosomal protein S5"/>
    <property type="match status" value="1"/>
</dbReference>
<dbReference type="FunFam" id="3.30.230.10:FF:000002">
    <property type="entry name" value="30S ribosomal protein S5"/>
    <property type="match status" value="1"/>
</dbReference>
<dbReference type="Gene3D" id="3.30.160.20">
    <property type="match status" value="1"/>
</dbReference>
<dbReference type="Gene3D" id="3.30.230.10">
    <property type="match status" value="1"/>
</dbReference>
<dbReference type="HAMAP" id="MF_01307_B">
    <property type="entry name" value="Ribosomal_uS5_B"/>
    <property type="match status" value="1"/>
</dbReference>
<dbReference type="InterPro" id="IPR020568">
    <property type="entry name" value="Ribosomal_Su5_D2-typ_SF"/>
</dbReference>
<dbReference type="InterPro" id="IPR000851">
    <property type="entry name" value="Ribosomal_uS5"/>
</dbReference>
<dbReference type="InterPro" id="IPR005712">
    <property type="entry name" value="Ribosomal_uS5_bac-type"/>
</dbReference>
<dbReference type="InterPro" id="IPR005324">
    <property type="entry name" value="Ribosomal_uS5_C"/>
</dbReference>
<dbReference type="InterPro" id="IPR013810">
    <property type="entry name" value="Ribosomal_uS5_N"/>
</dbReference>
<dbReference type="InterPro" id="IPR018192">
    <property type="entry name" value="Ribosomal_uS5_N_CS"/>
</dbReference>
<dbReference type="InterPro" id="IPR014721">
    <property type="entry name" value="Ribsml_uS5_D2-typ_fold_subgr"/>
</dbReference>
<dbReference type="NCBIfam" id="TIGR01021">
    <property type="entry name" value="rpsE_bact"/>
    <property type="match status" value="1"/>
</dbReference>
<dbReference type="PANTHER" id="PTHR48277">
    <property type="entry name" value="MITOCHONDRIAL RIBOSOMAL PROTEIN S5"/>
    <property type="match status" value="1"/>
</dbReference>
<dbReference type="PANTHER" id="PTHR48277:SF1">
    <property type="entry name" value="MITOCHONDRIAL RIBOSOMAL PROTEIN S5"/>
    <property type="match status" value="1"/>
</dbReference>
<dbReference type="Pfam" id="PF00333">
    <property type="entry name" value="Ribosomal_S5"/>
    <property type="match status" value="1"/>
</dbReference>
<dbReference type="Pfam" id="PF03719">
    <property type="entry name" value="Ribosomal_S5_C"/>
    <property type="match status" value="1"/>
</dbReference>
<dbReference type="SUPFAM" id="SSF54768">
    <property type="entry name" value="dsRNA-binding domain-like"/>
    <property type="match status" value="1"/>
</dbReference>
<dbReference type="SUPFAM" id="SSF54211">
    <property type="entry name" value="Ribosomal protein S5 domain 2-like"/>
    <property type="match status" value="1"/>
</dbReference>
<dbReference type="PROSITE" id="PS00585">
    <property type="entry name" value="RIBOSOMAL_S5"/>
    <property type="match status" value="1"/>
</dbReference>
<dbReference type="PROSITE" id="PS50881">
    <property type="entry name" value="S5_DSRBD"/>
    <property type="match status" value="1"/>
</dbReference>
<comment type="function">
    <text evidence="1">With S4 and S12 plays an important role in translational accuracy.</text>
</comment>
<comment type="function">
    <text evidence="1">Located at the back of the 30S subunit body where it stabilizes the conformation of the head with respect to the body.</text>
</comment>
<comment type="subunit">
    <text evidence="1">Part of the 30S ribosomal subunit. Contacts proteins S4 and S8.</text>
</comment>
<comment type="domain">
    <text>The N-terminal domain interacts with the head of the 30S subunit; the C-terminal domain interacts with the body and contacts protein S4. The interaction surface between S4 and S5 is involved in control of translational fidelity.</text>
</comment>
<comment type="similarity">
    <text evidence="1">Belongs to the universal ribosomal protein uS5 family.</text>
</comment>
<gene>
    <name evidence="1" type="primary">rpsE</name>
    <name type="ordered locus">Francci3_0599</name>
</gene>
<accession>Q2JFF9</accession>
<name>RS5_FRACC</name>
<feature type="chain" id="PRO_1000086012" description="Small ribosomal subunit protein uS5">
    <location>
        <begin position="1"/>
        <end position="202"/>
    </location>
</feature>
<feature type="domain" description="S5 DRBM" evidence="1">
    <location>
        <begin position="34"/>
        <end position="97"/>
    </location>
</feature>
<feature type="region of interest" description="Disordered" evidence="2">
    <location>
        <begin position="1"/>
        <end position="31"/>
    </location>
</feature>
<feature type="compositionally biased region" description="Gly residues" evidence="2">
    <location>
        <begin position="1"/>
        <end position="13"/>
    </location>
</feature>
<feature type="compositionally biased region" description="Basic and acidic residues" evidence="2">
    <location>
        <begin position="14"/>
        <end position="23"/>
    </location>
</feature>